<dbReference type="EMBL" id="AJ719419">
    <property type="protein sequence ID" value="CAG31078.1"/>
    <property type="molecule type" value="mRNA"/>
</dbReference>
<dbReference type="RefSeq" id="NP_001006239.2">
    <property type="nucleotide sequence ID" value="NM_001006239.3"/>
</dbReference>
<dbReference type="SMR" id="Q5ZMG5"/>
<dbReference type="FunCoup" id="Q5ZMG5">
    <property type="interactions" value="516"/>
</dbReference>
<dbReference type="STRING" id="9031.ENSGALP00000052670"/>
<dbReference type="PaxDb" id="9031-ENSGALP00000037100"/>
<dbReference type="GeneID" id="418011"/>
<dbReference type="KEGG" id="gga:418011"/>
<dbReference type="CTD" id="91582"/>
<dbReference type="VEuPathDB" id="HostDB:geneid_418011"/>
<dbReference type="eggNOG" id="ENOG502S1CM">
    <property type="taxonomic scope" value="Eukaryota"/>
</dbReference>
<dbReference type="InParanoid" id="Q5ZMG5"/>
<dbReference type="OrthoDB" id="6493910at2759"/>
<dbReference type="PhylomeDB" id="Q5ZMG5"/>
<dbReference type="PRO" id="PR:Q5ZMG5"/>
<dbReference type="Proteomes" id="UP000000539">
    <property type="component" value="Unassembled WGS sequence"/>
</dbReference>
<dbReference type="GO" id="GO:0005730">
    <property type="term" value="C:nucleolus"/>
    <property type="evidence" value="ECO:0000250"/>
    <property type="project" value="HGNC-UCL"/>
</dbReference>
<dbReference type="GO" id="GO:0005654">
    <property type="term" value="C:nucleoplasm"/>
    <property type="evidence" value="ECO:0000250"/>
    <property type="project" value="HGNC-UCL"/>
</dbReference>
<dbReference type="GO" id="GO:0032040">
    <property type="term" value="C:small-subunit processome"/>
    <property type="evidence" value="ECO:0000250"/>
    <property type="project" value="UniProtKB"/>
</dbReference>
<dbReference type="GO" id="GO:0019899">
    <property type="term" value="F:enzyme binding"/>
    <property type="evidence" value="ECO:0000318"/>
    <property type="project" value="GO_Central"/>
</dbReference>
<dbReference type="GO" id="GO:0042274">
    <property type="term" value="P:ribosomal small subunit biogenesis"/>
    <property type="evidence" value="ECO:0000250"/>
    <property type="project" value="UniProtKB"/>
</dbReference>
<dbReference type="InterPro" id="IPR023262">
    <property type="entry name" value="AROS"/>
</dbReference>
<dbReference type="PANTHER" id="PTHR31454">
    <property type="entry name" value="ACTIVE REGULATOR OF SIRT1"/>
    <property type="match status" value="1"/>
</dbReference>
<dbReference type="PANTHER" id="PTHR31454:SF2">
    <property type="entry name" value="ACTIVE REGULATOR OF SIRT1"/>
    <property type="match status" value="1"/>
</dbReference>
<dbReference type="Pfam" id="PF15684">
    <property type="entry name" value="AROS"/>
    <property type="match status" value="1"/>
</dbReference>
<dbReference type="PRINTS" id="PR02029">
    <property type="entry name" value="ACTREGSIRT1"/>
</dbReference>
<comment type="function">
    <text evidence="2">Part of the small subunit (SSU) processome, first precursor of the small eukaryotic ribosomal subunit. During the assembly of the SSU processome in the nucleolus, many ribosome biogenesis factors, an RNA chaperone and ribosomal proteins associate with the nascent pre-rRNA and work in concert to generate RNA folding, modifications, rearrangements and cleavage as well as targeted degradation of pre-ribosomal RNA by the RNA exosome. Acts as a chaperone that specifically mediates the integration of RPS19 in state post-A1. Direct regulator of SIRT1.</text>
</comment>
<comment type="subunit">
    <text evidence="2">Part of the small subunit (SSU) processome, composed of more than 70 proteins and the RNA chaperone small nucleolar RNA (snoRNA) U3.</text>
</comment>
<comment type="subcellular location">
    <subcellularLocation>
        <location evidence="1">Nucleus</location>
        <location evidence="1">Nucleolus</location>
    </subcellularLocation>
</comment>
<comment type="similarity">
    <text evidence="4">Belongs to the AROS family.</text>
</comment>
<gene>
    <name type="primary">RPS19BP1</name>
    <name type="synonym">AROS</name>
    <name type="ORF">RCJMB04_2b23</name>
</gene>
<sequence>MSASLIRRGLELLEAPGQGKAPPALQQGRDGTRPAGTARRRKVTAGPGKNKATIKGRVVKSAIEEYHKKKAVNHLKANLLYMTSGRCVADKAVTQQVLTQNRGRKSKDRPAEKKEKKKPEGTVFTEEDFRKFEREYFGIP</sequence>
<accession>Q5ZMG5</accession>
<feature type="chain" id="PRO_0000361538" description="Active regulator of SIRT1">
    <location>
        <begin position="1"/>
        <end position="140"/>
    </location>
</feature>
<feature type="region of interest" description="Disordered" evidence="3">
    <location>
        <begin position="1"/>
        <end position="52"/>
    </location>
</feature>
<feature type="region of interest" description="Disordered" evidence="3">
    <location>
        <begin position="95"/>
        <end position="123"/>
    </location>
</feature>
<feature type="compositionally biased region" description="Basic and acidic residues" evidence="3">
    <location>
        <begin position="108"/>
        <end position="120"/>
    </location>
</feature>
<protein>
    <recommendedName>
        <fullName>Active regulator of SIRT1</fullName>
    </recommendedName>
    <alternativeName>
        <fullName>40S ribosomal protein S19-binding protein 1</fullName>
        <shortName>RPS19-binding protein 1</shortName>
        <shortName>S19BP</shortName>
    </alternativeName>
</protein>
<reference key="1">
    <citation type="journal article" date="2005" name="Genome Biol.">
        <title>Full-length cDNAs from chicken bursal lymphocytes to facilitate gene function analysis.</title>
        <authorList>
            <person name="Caldwell R.B."/>
            <person name="Kierzek A.M."/>
            <person name="Arakawa H."/>
            <person name="Bezzubov Y."/>
            <person name="Zaim J."/>
            <person name="Fiedler P."/>
            <person name="Kutter S."/>
            <person name="Blagodatski A."/>
            <person name="Kostovska D."/>
            <person name="Koter M."/>
            <person name="Plachy J."/>
            <person name="Carninci P."/>
            <person name="Hayashizaki Y."/>
            <person name="Buerstedde J.-M."/>
        </authorList>
    </citation>
    <scope>NUCLEOTIDE SEQUENCE [LARGE SCALE MRNA]</scope>
    <source>
        <strain>CB</strain>
        <tissue>Bursa of Fabricius</tissue>
    </source>
</reference>
<proteinExistence type="evidence at transcript level"/>
<keyword id="KW-0539">Nucleus</keyword>
<keyword id="KW-1185">Reference proteome</keyword>
<evidence type="ECO:0000250" key="1"/>
<evidence type="ECO:0000250" key="2">
    <source>
        <dbReference type="UniProtKB" id="Q86WX3"/>
    </source>
</evidence>
<evidence type="ECO:0000256" key="3">
    <source>
        <dbReference type="SAM" id="MobiDB-lite"/>
    </source>
</evidence>
<evidence type="ECO:0000305" key="4"/>
<organism>
    <name type="scientific">Gallus gallus</name>
    <name type="common">Chicken</name>
    <dbReference type="NCBI Taxonomy" id="9031"/>
    <lineage>
        <taxon>Eukaryota</taxon>
        <taxon>Metazoa</taxon>
        <taxon>Chordata</taxon>
        <taxon>Craniata</taxon>
        <taxon>Vertebrata</taxon>
        <taxon>Euteleostomi</taxon>
        <taxon>Archelosauria</taxon>
        <taxon>Archosauria</taxon>
        <taxon>Dinosauria</taxon>
        <taxon>Saurischia</taxon>
        <taxon>Theropoda</taxon>
        <taxon>Coelurosauria</taxon>
        <taxon>Aves</taxon>
        <taxon>Neognathae</taxon>
        <taxon>Galloanserae</taxon>
        <taxon>Galliformes</taxon>
        <taxon>Phasianidae</taxon>
        <taxon>Phasianinae</taxon>
        <taxon>Gallus</taxon>
    </lineage>
</organism>
<name>AROS_CHICK</name>